<feature type="chain" id="PRO_1000214598" description="Large ribosomal subunit protein uL22">
    <location>
        <begin position="1"/>
        <end position="139"/>
    </location>
</feature>
<feature type="region of interest" description="Disordered" evidence="2">
    <location>
        <begin position="1"/>
        <end position="21"/>
    </location>
</feature>
<protein>
    <recommendedName>
        <fullName evidence="1">Large ribosomal subunit protein uL22</fullName>
    </recommendedName>
    <alternativeName>
        <fullName evidence="3">50S ribosomal protein L22</fullName>
    </alternativeName>
</protein>
<reference key="1">
    <citation type="journal article" date="2009" name="PLoS Genet.">
        <title>Alliance of proteomics and genomics to unravel the specificities of Sahara bacterium Deinococcus deserti.</title>
        <authorList>
            <person name="de Groot A."/>
            <person name="Dulermo R."/>
            <person name="Ortet P."/>
            <person name="Blanchard L."/>
            <person name="Guerin P."/>
            <person name="Fernandez B."/>
            <person name="Vacherie B."/>
            <person name="Dossat C."/>
            <person name="Jolivet E."/>
            <person name="Siguier P."/>
            <person name="Chandler M."/>
            <person name="Barakat M."/>
            <person name="Dedieu A."/>
            <person name="Barbe V."/>
            <person name="Heulin T."/>
            <person name="Sommer S."/>
            <person name="Achouak W."/>
            <person name="Armengaud J."/>
        </authorList>
    </citation>
    <scope>NUCLEOTIDE SEQUENCE [LARGE SCALE GENOMIC DNA]</scope>
    <source>
        <strain>DSM 17065 / CIP 109153 / LMG 22923 / VCD115</strain>
    </source>
</reference>
<gene>
    <name evidence="1" type="primary">rplV</name>
    <name type="ordered locus">Deide_18900</name>
</gene>
<proteinExistence type="inferred from homology"/>
<keyword id="KW-1185">Reference proteome</keyword>
<keyword id="KW-0687">Ribonucleoprotein</keyword>
<keyword id="KW-0689">Ribosomal protein</keyword>
<keyword id="KW-0694">RNA-binding</keyword>
<keyword id="KW-0699">rRNA-binding</keyword>
<accession>C1CXG1</accession>
<name>RL22_DEIDV</name>
<comment type="function">
    <text evidence="1">This protein binds specifically to 23S rRNA; its binding is stimulated by other ribosomal proteins, e.g. L4, L17, and L20. It is important during the early stages of 50S assembly. It makes multiple contacts with different domains of the 23S rRNA in the assembled 50S subunit and ribosome (By similarity).</text>
</comment>
<comment type="function">
    <text evidence="1">The globular domain of the protein is located near the polypeptide exit tunnel on the outside of the subunit, while an extended beta-hairpin is found that lines the wall of the exit tunnel in the center of the 70S ribosome.</text>
</comment>
<comment type="subunit">
    <text evidence="1">Part of the 50S ribosomal subunit.</text>
</comment>
<comment type="similarity">
    <text evidence="1">Belongs to the universal ribosomal protein uL22 family.</text>
</comment>
<sequence>MTAPTPEFRNKKQRKQQVKLRTPGKAIAKYVRMSPRKVRLVVDVIRGKSVSDAEAILRFLPKSASEPVAKVLNSAKHNALHNDEMLEDRLVITAAYVDAGPTLKRLIPRARGSANILKKRTSHITIIVGERNDTRGGKR</sequence>
<organism>
    <name type="scientific">Deinococcus deserti (strain DSM 17065 / CIP 109153 / LMG 22923 / VCD115)</name>
    <dbReference type="NCBI Taxonomy" id="546414"/>
    <lineage>
        <taxon>Bacteria</taxon>
        <taxon>Thermotogati</taxon>
        <taxon>Deinococcota</taxon>
        <taxon>Deinococci</taxon>
        <taxon>Deinococcales</taxon>
        <taxon>Deinococcaceae</taxon>
        <taxon>Deinococcus</taxon>
    </lineage>
</organism>
<dbReference type="EMBL" id="CP001114">
    <property type="protein sequence ID" value="ACO46878.1"/>
    <property type="molecule type" value="Genomic_DNA"/>
</dbReference>
<dbReference type="RefSeq" id="WP_012694000.1">
    <property type="nucleotide sequence ID" value="NC_012526.1"/>
</dbReference>
<dbReference type="SMR" id="C1CXG1"/>
<dbReference type="STRING" id="546414.Deide_18900"/>
<dbReference type="PaxDb" id="546414-Deide_18900"/>
<dbReference type="KEGG" id="ddr:Deide_18900"/>
<dbReference type="eggNOG" id="COG0091">
    <property type="taxonomic scope" value="Bacteria"/>
</dbReference>
<dbReference type="HOGENOM" id="CLU_083987_3_1_0"/>
<dbReference type="OrthoDB" id="9805969at2"/>
<dbReference type="Proteomes" id="UP000002208">
    <property type="component" value="Chromosome"/>
</dbReference>
<dbReference type="GO" id="GO:0022625">
    <property type="term" value="C:cytosolic large ribosomal subunit"/>
    <property type="evidence" value="ECO:0007669"/>
    <property type="project" value="TreeGrafter"/>
</dbReference>
<dbReference type="GO" id="GO:0019843">
    <property type="term" value="F:rRNA binding"/>
    <property type="evidence" value="ECO:0007669"/>
    <property type="project" value="UniProtKB-UniRule"/>
</dbReference>
<dbReference type="GO" id="GO:0003735">
    <property type="term" value="F:structural constituent of ribosome"/>
    <property type="evidence" value="ECO:0007669"/>
    <property type="project" value="InterPro"/>
</dbReference>
<dbReference type="GO" id="GO:0006412">
    <property type="term" value="P:translation"/>
    <property type="evidence" value="ECO:0007669"/>
    <property type="project" value="UniProtKB-UniRule"/>
</dbReference>
<dbReference type="CDD" id="cd00336">
    <property type="entry name" value="Ribosomal_L22"/>
    <property type="match status" value="1"/>
</dbReference>
<dbReference type="FunFam" id="3.90.470.10:FF:000011">
    <property type="entry name" value="50S ribosomal protein L22"/>
    <property type="match status" value="1"/>
</dbReference>
<dbReference type="Gene3D" id="3.90.470.10">
    <property type="entry name" value="Ribosomal protein L22/L17"/>
    <property type="match status" value="1"/>
</dbReference>
<dbReference type="HAMAP" id="MF_01331_B">
    <property type="entry name" value="Ribosomal_uL22_B"/>
    <property type="match status" value="1"/>
</dbReference>
<dbReference type="InterPro" id="IPR001063">
    <property type="entry name" value="Ribosomal_uL22"/>
</dbReference>
<dbReference type="InterPro" id="IPR005727">
    <property type="entry name" value="Ribosomal_uL22_bac/chlpt-type"/>
</dbReference>
<dbReference type="InterPro" id="IPR047867">
    <property type="entry name" value="Ribosomal_uL22_bac/org-type"/>
</dbReference>
<dbReference type="InterPro" id="IPR018260">
    <property type="entry name" value="Ribosomal_uL22_CS"/>
</dbReference>
<dbReference type="InterPro" id="IPR036394">
    <property type="entry name" value="Ribosomal_uL22_sf"/>
</dbReference>
<dbReference type="NCBIfam" id="TIGR01044">
    <property type="entry name" value="rplV_bact"/>
    <property type="match status" value="1"/>
</dbReference>
<dbReference type="PANTHER" id="PTHR13501">
    <property type="entry name" value="CHLOROPLAST 50S RIBOSOMAL PROTEIN L22-RELATED"/>
    <property type="match status" value="1"/>
</dbReference>
<dbReference type="PANTHER" id="PTHR13501:SF8">
    <property type="entry name" value="LARGE RIBOSOMAL SUBUNIT PROTEIN UL22M"/>
    <property type="match status" value="1"/>
</dbReference>
<dbReference type="Pfam" id="PF00237">
    <property type="entry name" value="Ribosomal_L22"/>
    <property type="match status" value="1"/>
</dbReference>
<dbReference type="SUPFAM" id="SSF54843">
    <property type="entry name" value="Ribosomal protein L22"/>
    <property type="match status" value="1"/>
</dbReference>
<dbReference type="PROSITE" id="PS00464">
    <property type="entry name" value="RIBOSOMAL_L22"/>
    <property type="match status" value="1"/>
</dbReference>
<evidence type="ECO:0000255" key="1">
    <source>
        <dbReference type="HAMAP-Rule" id="MF_01331"/>
    </source>
</evidence>
<evidence type="ECO:0000256" key="2">
    <source>
        <dbReference type="SAM" id="MobiDB-lite"/>
    </source>
</evidence>
<evidence type="ECO:0000305" key="3"/>